<name>RL13_XANOM</name>
<keyword id="KW-0687">Ribonucleoprotein</keyword>
<keyword id="KW-0689">Ribosomal protein</keyword>
<feature type="chain" id="PRO_0000261831" description="Large ribosomal subunit protein uL13">
    <location>
        <begin position="1"/>
        <end position="142"/>
    </location>
</feature>
<evidence type="ECO:0000255" key="1">
    <source>
        <dbReference type="HAMAP-Rule" id="MF_01366"/>
    </source>
</evidence>
<evidence type="ECO:0000305" key="2"/>
<gene>
    <name evidence="1" type="primary">rplM</name>
    <name type="ordered locus">XOO3929</name>
</gene>
<protein>
    <recommendedName>
        <fullName evidence="1">Large ribosomal subunit protein uL13</fullName>
    </recommendedName>
    <alternativeName>
        <fullName evidence="2">50S ribosomal protein L13</fullName>
    </alternativeName>
</protein>
<comment type="function">
    <text evidence="1">This protein is one of the early assembly proteins of the 50S ribosomal subunit, although it is not seen to bind rRNA by itself. It is important during the early stages of 50S assembly.</text>
</comment>
<comment type="subunit">
    <text evidence="1">Part of the 50S ribosomal subunit.</text>
</comment>
<comment type="similarity">
    <text evidence="1">Belongs to the universal ribosomal protein uL13 family.</text>
</comment>
<accession>Q2NYE3</accession>
<dbReference type="EMBL" id="AP008229">
    <property type="protein sequence ID" value="BAE70684.1"/>
    <property type="molecule type" value="Genomic_DNA"/>
</dbReference>
<dbReference type="RefSeq" id="WP_011260491.1">
    <property type="nucleotide sequence ID" value="NC_007705.1"/>
</dbReference>
<dbReference type="SMR" id="Q2NYE3"/>
<dbReference type="KEGG" id="xom:XOO3929"/>
<dbReference type="HOGENOM" id="CLU_082184_2_2_6"/>
<dbReference type="GO" id="GO:0022625">
    <property type="term" value="C:cytosolic large ribosomal subunit"/>
    <property type="evidence" value="ECO:0007669"/>
    <property type="project" value="TreeGrafter"/>
</dbReference>
<dbReference type="GO" id="GO:0003729">
    <property type="term" value="F:mRNA binding"/>
    <property type="evidence" value="ECO:0007669"/>
    <property type="project" value="TreeGrafter"/>
</dbReference>
<dbReference type="GO" id="GO:0003735">
    <property type="term" value="F:structural constituent of ribosome"/>
    <property type="evidence" value="ECO:0007669"/>
    <property type="project" value="InterPro"/>
</dbReference>
<dbReference type="GO" id="GO:0017148">
    <property type="term" value="P:negative regulation of translation"/>
    <property type="evidence" value="ECO:0007669"/>
    <property type="project" value="TreeGrafter"/>
</dbReference>
<dbReference type="GO" id="GO:0006412">
    <property type="term" value="P:translation"/>
    <property type="evidence" value="ECO:0007669"/>
    <property type="project" value="UniProtKB-UniRule"/>
</dbReference>
<dbReference type="CDD" id="cd00392">
    <property type="entry name" value="Ribosomal_L13"/>
    <property type="match status" value="1"/>
</dbReference>
<dbReference type="FunFam" id="3.90.1180.10:FF:000001">
    <property type="entry name" value="50S ribosomal protein L13"/>
    <property type="match status" value="1"/>
</dbReference>
<dbReference type="Gene3D" id="3.90.1180.10">
    <property type="entry name" value="Ribosomal protein L13"/>
    <property type="match status" value="1"/>
</dbReference>
<dbReference type="HAMAP" id="MF_01366">
    <property type="entry name" value="Ribosomal_uL13"/>
    <property type="match status" value="1"/>
</dbReference>
<dbReference type="InterPro" id="IPR005822">
    <property type="entry name" value="Ribosomal_uL13"/>
</dbReference>
<dbReference type="InterPro" id="IPR005823">
    <property type="entry name" value="Ribosomal_uL13_bac-type"/>
</dbReference>
<dbReference type="InterPro" id="IPR023563">
    <property type="entry name" value="Ribosomal_uL13_CS"/>
</dbReference>
<dbReference type="InterPro" id="IPR036899">
    <property type="entry name" value="Ribosomal_uL13_sf"/>
</dbReference>
<dbReference type="NCBIfam" id="TIGR01066">
    <property type="entry name" value="rplM_bact"/>
    <property type="match status" value="1"/>
</dbReference>
<dbReference type="PANTHER" id="PTHR11545:SF2">
    <property type="entry name" value="LARGE RIBOSOMAL SUBUNIT PROTEIN UL13M"/>
    <property type="match status" value="1"/>
</dbReference>
<dbReference type="PANTHER" id="PTHR11545">
    <property type="entry name" value="RIBOSOMAL PROTEIN L13"/>
    <property type="match status" value="1"/>
</dbReference>
<dbReference type="Pfam" id="PF00572">
    <property type="entry name" value="Ribosomal_L13"/>
    <property type="match status" value="1"/>
</dbReference>
<dbReference type="PIRSF" id="PIRSF002181">
    <property type="entry name" value="Ribosomal_L13"/>
    <property type="match status" value="1"/>
</dbReference>
<dbReference type="SUPFAM" id="SSF52161">
    <property type="entry name" value="Ribosomal protein L13"/>
    <property type="match status" value="1"/>
</dbReference>
<dbReference type="PROSITE" id="PS00783">
    <property type="entry name" value="RIBOSOMAL_L13"/>
    <property type="match status" value="1"/>
</dbReference>
<sequence>MTTFTAKSETVQRDWYLVDAAGKTLGRLSTELARRLRGKHKPVYTPHVDTGDYLVVINAEKIVVTGNKLKDKKYHRFTGYIGNLKTESLEQALQRHPERVIEIAVKGMLPKGPMGRTMYRKLKVYSGAEHPHAAQQPQVLDI</sequence>
<proteinExistence type="inferred from homology"/>
<organism>
    <name type="scientific">Xanthomonas oryzae pv. oryzae (strain MAFF 311018)</name>
    <dbReference type="NCBI Taxonomy" id="342109"/>
    <lineage>
        <taxon>Bacteria</taxon>
        <taxon>Pseudomonadati</taxon>
        <taxon>Pseudomonadota</taxon>
        <taxon>Gammaproteobacteria</taxon>
        <taxon>Lysobacterales</taxon>
        <taxon>Lysobacteraceae</taxon>
        <taxon>Xanthomonas</taxon>
    </lineage>
</organism>
<reference key="1">
    <citation type="journal article" date="2005" name="Jpn. Agric. Res. Q.">
        <title>Genome sequence of Xanthomonas oryzae pv. oryzae suggests contribution of large numbers of effector genes and insertion sequences to its race diversity.</title>
        <authorList>
            <person name="Ochiai H."/>
            <person name="Inoue Y."/>
            <person name="Takeya M."/>
            <person name="Sasaki A."/>
            <person name="Kaku H."/>
        </authorList>
    </citation>
    <scope>NUCLEOTIDE SEQUENCE [LARGE SCALE GENOMIC DNA]</scope>
    <source>
        <strain>MAFF 311018</strain>
    </source>
</reference>